<name>NAOX_STRP6</name>
<proteinExistence type="evidence at protein level"/>
<organism>
    <name type="scientific">Streptococcus pyogenes serotype M6 (strain ATCC BAA-946 / MGAS10394)</name>
    <dbReference type="NCBI Taxonomy" id="286636"/>
    <lineage>
        <taxon>Bacteria</taxon>
        <taxon>Bacillati</taxon>
        <taxon>Bacillota</taxon>
        <taxon>Bacilli</taxon>
        <taxon>Lactobacillales</taxon>
        <taxon>Streptococcaceae</taxon>
        <taxon>Streptococcus</taxon>
    </lineage>
</organism>
<comment type="function">
    <text evidence="2">Catalyzes the four-electron reduction of molecular oxygen to water.</text>
</comment>
<comment type="catalytic activity">
    <reaction evidence="2">
        <text>2 NADH + O2 + 2 H(+) = 2 NAD(+) + 2 H2O</text>
        <dbReference type="Rhea" id="RHEA:37799"/>
        <dbReference type="ChEBI" id="CHEBI:15377"/>
        <dbReference type="ChEBI" id="CHEBI:15378"/>
        <dbReference type="ChEBI" id="CHEBI:15379"/>
        <dbReference type="ChEBI" id="CHEBI:57540"/>
        <dbReference type="ChEBI" id="CHEBI:57945"/>
        <dbReference type="EC" id="1.6.3.4"/>
    </reaction>
</comment>
<comment type="cofactor">
    <cofactor evidence="2">
        <name>FAD</name>
        <dbReference type="ChEBI" id="CHEBI:57692"/>
    </cofactor>
    <text evidence="2">Binds 1 FAD per subunit.</text>
</comment>
<comment type="mass spectrometry" mass="49603.57" method="Electrospray" evidence="3"/>
<comment type="similarity">
    <text evidence="5">Belongs to the class-III pyridine nucleotide-disulfide oxidoreductase family.</text>
</comment>
<sequence length="456" mass="49636">MSKIVVVGANHAGTACIKTMLTNYGDANEIVVFDQNSNISFLGCGMALWIGEQIAGPEGLFYSDKEELESLGAKVYMESPVQSIDYDAKTVTALVDGKNHVETYDKLIFATGSQPILPPIKGAEIKEGSLEFEATLENLQFVKLYQNSADVIAKLENKDIKRVAVVGAGYIGVELAEAFQRKGKEVVLIDVVDTCLAGYYDRDLTDLMAKNMEEHGIQLAFGETVKEVAGNGKVEKIITDKNEYDVDMVILAVGFRPNTTLGNGKIDLFRNGAFLVNKRQETSIPGVYAIGDCATIYDNATRDTNYIALASNAVRTGIVAAHNACGTDLEGIGVQGSNGISIYGLHMVSTGLTLEKAKRLGFDAAVTEYTDNQKPEFIEHGNFPVTIKIVYDKDSRRILGAQMAAREDMSMGIHMFSLAIQEGVTIEKLALTDIFFLPHFNKPYNYITMAALGAKD</sequence>
<gene>
    <name type="ordered locus">M6_Spy0868</name>
</gene>
<dbReference type="EC" id="1.6.3.4" evidence="2"/>
<dbReference type="EMBL" id="CP000003">
    <property type="protein sequence ID" value="AAT87003.1"/>
    <property type="molecule type" value="Genomic_DNA"/>
</dbReference>
<dbReference type="PDB" id="2BC0">
    <property type="method" value="X-ray"/>
    <property type="resolution" value="2.00 A"/>
    <property type="chains" value="A/B=2-456"/>
</dbReference>
<dbReference type="PDB" id="2BC1">
    <property type="method" value="X-ray"/>
    <property type="resolution" value="2.15 A"/>
    <property type="chains" value="A/B=2-456"/>
</dbReference>
<dbReference type="PDB" id="2BCP">
    <property type="method" value="X-ray"/>
    <property type="resolution" value="2.10 A"/>
    <property type="chains" value="A/B=2-456"/>
</dbReference>
<dbReference type="PDBsum" id="2BC0"/>
<dbReference type="PDBsum" id="2BC1"/>
<dbReference type="PDBsum" id="2BCP"/>
<dbReference type="SMR" id="Q5XC60"/>
<dbReference type="KEGG" id="spa:M6_Spy0868"/>
<dbReference type="HOGENOM" id="CLU_003291_1_0_9"/>
<dbReference type="EvolutionaryTrace" id="Q5XC60"/>
<dbReference type="Proteomes" id="UP000001167">
    <property type="component" value="Chromosome"/>
</dbReference>
<dbReference type="GO" id="GO:0008137">
    <property type="term" value="F:NADH dehydrogenase (ubiquinone) activity"/>
    <property type="evidence" value="ECO:0007669"/>
    <property type="project" value="UniProtKB-EC"/>
</dbReference>
<dbReference type="Gene3D" id="3.30.390.30">
    <property type="match status" value="1"/>
</dbReference>
<dbReference type="Gene3D" id="3.50.50.60">
    <property type="entry name" value="FAD/NAD(P)-binding domain"/>
    <property type="match status" value="2"/>
</dbReference>
<dbReference type="InterPro" id="IPR050260">
    <property type="entry name" value="FAD-bd_OxRdtase"/>
</dbReference>
<dbReference type="InterPro" id="IPR036188">
    <property type="entry name" value="FAD/NAD-bd_sf"/>
</dbReference>
<dbReference type="InterPro" id="IPR023753">
    <property type="entry name" value="FAD/NAD-binding_dom"/>
</dbReference>
<dbReference type="InterPro" id="IPR016156">
    <property type="entry name" value="FAD/NAD-linked_Rdtase_dimer_sf"/>
</dbReference>
<dbReference type="InterPro" id="IPR004099">
    <property type="entry name" value="Pyr_nucl-diS_OxRdtase_dimer"/>
</dbReference>
<dbReference type="NCBIfam" id="NF046103">
    <property type="entry name" value="NOXase_Strep"/>
    <property type="match status" value="1"/>
</dbReference>
<dbReference type="PANTHER" id="PTHR43429:SF1">
    <property type="entry name" value="NAD(P)H SULFUR OXIDOREDUCTASE (COA-DEPENDENT)"/>
    <property type="match status" value="1"/>
</dbReference>
<dbReference type="PANTHER" id="PTHR43429">
    <property type="entry name" value="PYRIDINE NUCLEOTIDE-DISULFIDE OXIDOREDUCTASE DOMAIN-CONTAINING"/>
    <property type="match status" value="1"/>
</dbReference>
<dbReference type="Pfam" id="PF07992">
    <property type="entry name" value="Pyr_redox_2"/>
    <property type="match status" value="1"/>
</dbReference>
<dbReference type="Pfam" id="PF02852">
    <property type="entry name" value="Pyr_redox_dim"/>
    <property type="match status" value="1"/>
</dbReference>
<dbReference type="PRINTS" id="PR00368">
    <property type="entry name" value="FADPNR"/>
</dbReference>
<dbReference type="PRINTS" id="PR00411">
    <property type="entry name" value="PNDRDTASEI"/>
</dbReference>
<dbReference type="SUPFAM" id="SSF51905">
    <property type="entry name" value="FAD/NAD(P)-binding domain"/>
    <property type="match status" value="1"/>
</dbReference>
<dbReference type="SUPFAM" id="SSF55424">
    <property type="entry name" value="FAD/NAD-linked reductases, dimerisation (C-terminal) domain"/>
    <property type="match status" value="1"/>
</dbReference>
<feature type="chain" id="PRO_0000259672" description="NADH oxidase">
    <location>
        <begin position="1"/>
        <end position="456"/>
    </location>
</feature>
<feature type="active site" description="Proton acceptor" evidence="1">
    <location>
        <position position="11"/>
    </location>
</feature>
<feature type="active site" description="Redox-active" evidence="2 8">
    <location>
        <position position="44"/>
    </location>
</feature>
<feature type="binding site" evidence="2 8 9 10">
    <location>
        <position position="10"/>
    </location>
    <ligand>
        <name>FAD</name>
        <dbReference type="ChEBI" id="CHEBI:57692"/>
    </ligand>
</feature>
<feature type="binding site" evidence="2 8 9 10">
    <location>
        <position position="12"/>
    </location>
    <ligand>
        <name>FAD</name>
        <dbReference type="ChEBI" id="CHEBI:57692"/>
    </ligand>
</feature>
<feature type="binding site" evidence="2 8 9 10">
    <location>
        <position position="34"/>
    </location>
    <ligand>
        <name>FAD</name>
        <dbReference type="ChEBI" id="CHEBI:57692"/>
    </ligand>
</feature>
<feature type="binding site" evidence="2 8 9 10">
    <location>
        <position position="35"/>
    </location>
    <ligand>
        <name>FAD</name>
        <dbReference type="ChEBI" id="CHEBI:57692"/>
    </ligand>
</feature>
<feature type="binding site" evidence="2 8">
    <location>
        <position position="44"/>
    </location>
    <ligand>
        <name>FAD</name>
        <dbReference type="ChEBI" id="CHEBI:57692"/>
    </ligand>
</feature>
<feature type="binding site" evidence="2 8 9 10">
    <location>
        <position position="81"/>
    </location>
    <ligand>
        <name>FAD</name>
        <dbReference type="ChEBI" id="CHEBI:57692"/>
    </ligand>
</feature>
<feature type="binding site" evidence="2 8 10">
    <location>
        <position position="110"/>
    </location>
    <ligand>
        <name>FAD</name>
        <dbReference type="ChEBI" id="CHEBI:57692"/>
    </ligand>
</feature>
<feature type="binding site" evidence="2 8 9 10">
    <location>
        <position position="113"/>
    </location>
    <ligand>
        <name>FAD</name>
        <dbReference type="ChEBI" id="CHEBI:57692"/>
    </ligand>
</feature>
<feature type="binding site" evidence="2 8 9 10">
    <location>
        <position position="143"/>
    </location>
    <ligand>
        <name>FAD</name>
        <dbReference type="ChEBI" id="CHEBI:57692"/>
    </ligand>
</feature>
<feature type="binding site" evidence="2 9 10">
    <location>
        <position position="170"/>
    </location>
    <ligand>
        <name>FAD</name>
        <dbReference type="ChEBI" id="CHEBI:57692"/>
    </ligand>
</feature>
<feature type="binding site" evidence="1">
    <location>
        <position position="171"/>
    </location>
    <ligand>
        <name>NAD(+)</name>
        <dbReference type="ChEBI" id="CHEBI:57540"/>
    </ligand>
</feature>
<feature type="binding site" evidence="1">
    <location>
        <position position="190"/>
    </location>
    <ligand>
        <name>NAD(+)</name>
        <dbReference type="ChEBI" id="CHEBI:57540"/>
    </ligand>
</feature>
<feature type="binding site" evidence="1">
    <location>
        <position position="199"/>
    </location>
    <ligand>
        <name>NAD(+)</name>
        <dbReference type="ChEBI" id="CHEBI:57540"/>
    </ligand>
</feature>
<feature type="binding site" evidence="1">
    <location>
        <position position="254"/>
    </location>
    <ligand>
        <name>NAD(+)</name>
        <dbReference type="ChEBI" id="CHEBI:57540"/>
    </ligand>
</feature>
<feature type="binding site" evidence="2 8 9 10">
    <location>
        <position position="292"/>
    </location>
    <ligand>
        <name>FAD</name>
        <dbReference type="ChEBI" id="CHEBI:57692"/>
    </ligand>
</feature>
<feature type="binding site" evidence="1">
    <location>
        <position position="308"/>
    </location>
    <ligand>
        <name>NAD(+)</name>
        <dbReference type="ChEBI" id="CHEBI:57540"/>
    </ligand>
</feature>
<feature type="binding site" evidence="2 8 9 10">
    <location>
        <position position="309"/>
    </location>
    <ligand>
        <name>FAD</name>
        <dbReference type="ChEBI" id="CHEBI:57692"/>
    </ligand>
</feature>
<feature type="binding site" evidence="2 8 9 10">
    <location>
        <position position="310"/>
    </location>
    <ligand>
        <name>FAD</name>
        <dbReference type="ChEBI" id="CHEBI:57692"/>
    </ligand>
</feature>
<feature type="binding site" evidence="2 8 9 10">
    <location>
        <position position="311"/>
    </location>
    <ligand>
        <name>FAD</name>
        <dbReference type="ChEBI" id="CHEBI:57692"/>
    </ligand>
</feature>
<feature type="binding site" evidence="1">
    <location>
        <position position="339"/>
    </location>
    <ligand>
        <name>NAD(+)</name>
        <dbReference type="ChEBI" id="CHEBI:57540"/>
    </ligand>
</feature>
<feature type="binding site" evidence="2 8 9">
    <location>
        <position position="436"/>
    </location>
    <ligand>
        <name>FAD</name>
        <dbReference type="ChEBI" id="CHEBI:57692"/>
    </ligand>
</feature>
<feature type="modified residue" description="Cysteine sulfinic acid (-SO2H)" evidence="2 8">
    <location>
        <position position="44"/>
    </location>
</feature>
<feature type="mutagenesis site" description="Reduces specific activity about 13-fold, in vitro." evidence="2">
    <original>C</original>
    <variation>S</variation>
    <location>
        <position position="44"/>
    </location>
</feature>
<feature type="sequence conflict" description="In Ref. 2; AA sequence." evidence="5" ref="2">
    <original>E</original>
    <variation>V</variation>
    <location>
        <position position="177"/>
    </location>
</feature>
<feature type="strand" evidence="11">
    <location>
        <begin position="3"/>
        <end position="7"/>
    </location>
</feature>
<feature type="helix" evidence="11">
    <location>
        <begin position="11"/>
        <end position="24"/>
    </location>
</feature>
<feature type="helix" evidence="11">
    <location>
        <begin position="25"/>
        <end position="27"/>
    </location>
</feature>
<feature type="strand" evidence="11">
    <location>
        <begin position="28"/>
        <end position="33"/>
    </location>
</feature>
<feature type="strand" evidence="11">
    <location>
        <begin position="35"/>
        <end position="37"/>
    </location>
</feature>
<feature type="helix" evidence="11">
    <location>
        <begin position="43"/>
        <end position="45"/>
    </location>
</feature>
<feature type="helix" evidence="11">
    <location>
        <begin position="46"/>
        <end position="50"/>
    </location>
</feature>
<feature type="strand" evidence="11">
    <location>
        <begin position="53"/>
        <end position="55"/>
    </location>
</feature>
<feature type="helix" evidence="11">
    <location>
        <begin position="58"/>
        <end position="60"/>
    </location>
</feature>
<feature type="helix" evidence="11">
    <location>
        <begin position="65"/>
        <end position="70"/>
    </location>
</feature>
<feature type="strand" evidence="11">
    <location>
        <begin position="74"/>
        <end position="76"/>
    </location>
</feature>
<feature type="strand" evidence="11">
    <location>
        <begin position="81"/>
        <end position="85"/>
    </location>
</feature>
<feature type="turn" evidence="11">
    <location>
        <begin position="86"/>
        <end position="89"/>
    </location>
</feature>
<feature type="strand" evidence="11">
    <location>
        <begin position="90"/>
        <end position="95"/>
    </location>
</feature>
<feature type="strand" evidence="11">
    <location>
        <begin position="98"/>
        <end position="103"/>
    </location>
</feature>
<feature type="strand" evidence="11">
    <location>
        <begin position="105"/>
        <end position="109"/>
    </location>
</feature>
<feature type="strand" evidence="11">
    <location>
        <begin position="113"/>
        <end position="115"/>
    </location>
</feature>
<feature type="strand" evidence="11">
    <location>
        <begin position="134"/>
        <end position="136"/>
    </location>
</feature>
<feature type="strand" evidence="11">
    <location>
        <begin position="139"/>
        <end position="141"/>
    </location>
</feature>
<feature type="helix" evidence="11">
    <location>
        <begin position="145"/>
        <end position="154"/>
    </location>
</feature>
<feature type="strand" evidence="11">
    <location>
        <begin position="162"/>
        <end position="166"/>
    </location>
</feature>
<feature type="helix" evidence="11">
    <location>
        <begin position="170"/>
        <end position="181"/>
    </location>
</feature>
<feature type="strand" evidence="11">
    <location>
        <begin position="185"/>
        <end position="194"/>
    </location>
</feature>
<feature type="turn" evidence="11">
    <location>
        <begin position="195"/>
        <end position="199"/>
    </location>
</feature>
<feature type="helix" evidence="11">
    <location>
        <begin position="202"/>
        <end position="213"/>
    </location>
</feature>
<feature type="turn" evidence="11">
    <location>
        <begin position="214"/>
        <end position="216"/>
    </location>
</feature>
<feature type="strand" evidence="11">
    <location>
        <begin position="218"/>
        <end position="221"/>
    </location>
</feature>
<feature type="strand" evidence="11">
    <location>
        <begin position="225"/>
        <end position="229"/>
    </location>
</feature>
<feature type="strand" evidence="11">
    <location>
        <begin position="231"/>
        <end position="233"/>
    </location>
</feature>
<feature type="strand" evidence="11">
    <location>
        <begin position="236"/>
        <end position="241"/>
    </location>
</feature>
<feature type="strand" evidence="11">
    <location>
        <begin position="243"/>
        <end position="245"/>
    </location>
</feature>
<feature type="strand" evidence="11">
    <location>
        <begin position="247"/>
        <end position="251"/>
    </location>
</feature>
<feature type="strand" evidence="11">
    <location>
        <begin position="255"/>
        <end position="257"/>
    </location>
</feature>
<feature type="helix" evidence="11">
    <location>
        <begin position="260"/>
        <end position="262"/>
    </location>
</feature>
<feature type="strand" evidence="11">
    <location>
        <begin position="287"/>
        <end position="289"/>
    </location>
</feature>
<feature type="helix" evidence="11">
    <location>
        <begin position="291"/>
        <end position="293"/>
    </location>
</feature>
<feature type="strand" evidence="11">
    <location>
        <begin position="296"/>
        <end position="298"/>
    </location>
</feature>
<feature type="turn" evidence="11">
    <location>
        <begin position="299"/>
        <end position="302"/>
    </location>
</feature>
<feature type="strand" evidence="11">
    <location>
        <begin position="303"/>
        <end position="305"/>
    </location>
</feature>
<feature type="helix" evidence="11">
    <location>
        <begin position="310"/>
        <end position="324"/>
    </location>
</feature>
<feature type="strand" evidence="11">
    <location>
        <begin position="338"/>
        <end position="342"/>
    </location>
</feature>
<feature type="strand" evidence="11">
    <location>
        <begin position="345"/>
        <end position="351"/>
    </location>
</feature>
<feature type="helix" evidence="11">
    <location>
        <begin position="354"/>
        <end position="359"/>
    </location>
</feature>
<feature type="strand" evidence="11">
    <location>
        <begin position="364"/>
        <end position="374"/>
    </location>
</feature>
<feature type="strand" evidence="11">
    <location>
        <begin position="384"/>
        <end position="392"/>
    </location>
</feature>
<feature type="turn" evidence="11">
    <location>
        <begin position="393"/>
        <end position="395"/>
    </location>
</feature>
<feature type="strand" evidence="11">
    <location>
        <begin position="397"/>
        <end position="407"/>
    </location>
</feature>
<feature type="helix" evidence="11">
    <location>
        <begin position="412"/>
        <end position="422"/>
    </location>
</feature>
<feature type="helix" evidence="11">
    <location>
        <begin position="426"/>
        <end position="431"/>
    </location>
</feature>
<feature type="turn" evidence="11">
    <location>
        <begin position="438"/>
        <end position="440"/>
    </location>
</feature>
<feature type="helix" evidence="11">
    <location>
        <begin position="446"/>
        <end position="452"/>
    </location>
</feature>
<reference evidence="7" key="1">
    <citation type="journal article" date="2004" name="J. Infect. Dis.">
        <title>Progress toward characterization of the group A Streptococcus metagenome: complete genome sequence of a macrolide-resistant serotype M6 strain.</title>
        <authorList>
            <person name="Banks D.J."/>
            <person name="Porcella S.F."/>
            <person name="Barbian K.D."/>
            <person name="Beres S.B."/>
            <person name="Philips L.E."/>
            <person name="Voyich J.M."/>
            <person name="DeLeo F.R."/>
            <person name="Martin J.M."/>
            <person name="Somerville G.A."/>
            <person name="Musser J.M."/>
        </authorList>
    </citation>
    <scope>NUCLEOTIDE SEQUENCE [LARGE SCALE GENOMIC DNA]</scope>
    <source>
        <strain>ATCC BAA-946 / MGAS10394</strain>
    </source>
</reference>
<reference evidence="5" key="2">
    <citation type="submission" date="2000-05" db="UniProtKB">
        <title>Two-dimensional gel electrophoresis map of Streptococcus pyogenes proteins.</title>
        <authorList>
            <person name="Hogan D.A."/>
            <person name="Du P."/>
            <person name="Stevenson T.I."/>
            <person name="Whitton M."/>
            <person name="Kilby G.W."/>
            <person name="Rogers J."/>
            <person name="VanBogelen R.A."/>
        </authorList>
    </citation>
    <scope>PROTEIN SEQUENCE OF 75-89; 107-121; 127-143; 163-181 AND 303-315</scope>
    <scope>MASS SPECTROMETRY</scope>
    <source>
        <strain evidence="3">JRS4 / Serotype M6</strain>
    </source>
</reference>
<reference evidence="8 9 10" key="3">
    <citation type="journal article" date="2015" name="Biochemistry">
        <title>Structural Analysis of Streptococcus pyogenes NADH Oxidase: Conformational Dynamics Involved in Formation of the C(4a)-Peroxyflavin Intermediate.</title>
        <authorList>
            <person name="Wallen J.R."/>
            <person name="Mallett T.C."/>
            <person name="Okuno T."/>
            <person name="Parsonage D."/>
            <person name="Sakai H."/>
            <person name="Tsukihara T."/>
            <person name="Claiborne A."/>
        </authorList>
    </citation>
    <scope>X-RAY CRYSTALLOGRAPHY (2.00 ANGSTROMS) OF 2-456 IN COMPLEX WITH FAD</scope>
    <scope>ACTIVE SITE</scope>
    <scope>CATALYTIC ACTIVITY</scope>
    <scope>COFACTOR</scope>
    <scope>SULFINATION AT CYS-44</scope>
    <scope>OXIDATION AT CYS-44</scope>
    <scope>MUTAGENESIS OF CYS-44</scope>
    <source>
        <strain>CS44</strain>
    </source>
</reference>
<protein>
    <recommendedName>
        <fullName evidence="4">NADH oxidase</fullName>
        <shortName evidence="6">NOXase</shortName>
        <ecNumber evidence="2">1.6.3.4</ecNumber>
    </recommendedName>
</protein>
<accession>Q5XC60</accession>
<accession>P82571</accession>
<keyword id="KW-0002">3D-structure</keyword>
<keyword id="KW-0903">Direct protein sequencing</keyword>
<keyword id="KW-0274">FAD</keyword>
<keyword id="KW-0285">Flavoprotein</keyword>
<keyword id="KW-0520">NAD</keyword>
<keyword id="KW-0558">Oxidation</keyword>
<keyword id="KW-0560">Oxidoreductase</keyword>
<keyword id="KW-0676">Redox-active center</keyword>
<evidence type="ECO:0000250" key="1">
    <source>
        <dbReference type="UniProtKB" id="P37062"/>
    </source>
</evidence>
<evidence type="ECO:0000269" key="2">
    <source>
    </source>
</evidence>
<evidence type="ECO:0000269" key="3">
    <source ref="2"/>
</evidence>
<evidence type="ECO:0000303" key="4">
    <source>
    </source>
</evidence>
<evidence type="ECO:0000305" key="5"/>
<evidence type="ECO:0000305" key="6">
    <source>
    </source>
</evidence>
<evidence type="ECO:0000312" key="7">
    <source>
        <dbReference type="EMBL" id="AAT87003.1"/>
    </source>
</evidence>
<evidence type="ECO:0007744" key="8">
    <source>
        <dbReference type="PDB" id="2BC0"/>
    </source>
</evidence>
<evidence type="ECO:0007744" key="9">
    <source>
        <dbReference type="PDB" id="2BC1"/>
    </source>
</evidence>
<evidence type="ECO:0007744" key="10">
    <source>
        <dbReference type="PDB" id="2BCP"/>
    </source>
</evidence>
<evidence type="ECO:0007829" key="11">
    <source>
        <dbReference type="PDB" id="2BC0"/>
    </source>
</evidence>